<protein>
    <recommendedName>
        <fullName evidence="1">Large ribosomal subunit protein bL33c</fullName>
    </recommendedName>
    <alternativeName>
        <fullName evidence="2">50S ribosomal protein L33, chloroplastic</fullName>
    </alternativeName>
</protein>
<dbReference type="EMBL" id="AF494278">
    <property type="protein sequence ID" value="AAM96562.1"/>
    <property type="molecule type" value="Genomic_DNA"/>
</dbReference>
<dbReference type="RefSeq" id="NP_683800.1">
    <property type="nucleotide sequence ID" value="NC_004115.1"/>
</dbReference>
<dbReference type="GeneID" id="860718"/>
<dbReference type="GO" id="GO:0009507">
    <property type="term" value="C:chloroplast"/>
    <property type="evidence" value="ECO:0007669"/>
    <property type="project" value="UniProtKB-SubCell"/>
</dbReference>
<dbReference type="GO" id="GO:1990904">
    <property type="term" value="C:ribonucleoprotein complex"/>
    <property type="evidence" value="ECO:0007669"/>
    <property type="project" value="UniProtKB-KW"/>
</dbReference>
<dbReference type="GO" id="GO:0005840">
    <property type="term" value="C:ribosome"/>
    <property type="evidence" value="ECO:0007669"/>
    <property type="project" value="UniProtKB-KW"/>
</dbReference>
<dbReference type="GO" id="GO:0003735">
    <property type="term" value="F:structural constituent of ribosome"/>
    <property type="evidence" value="ECO:0007669"/>
    <property type="project" value="InterPro"/>
</dbReference>
<dbReference type="GO" id="GO:0006412">
    <property type="term" value="P:translation"/>
    <property type="evidence" value="ECO:0007669"/>
    <property type="project" value="UniProtKB-UniRule"/>
</dbReference>
<dbReference type="Gene3D" id="2.20.28.120">
    <property type="entry name" value="Ribosomal protein L33"/>
    <property type="match status" value="1"/>
</dbReference>
<dbReference type="HAMAP" id="MF_00294">
    <property type="entry name" value="Ribosomal_bL33"/>
    <property type="match status" value="1"/>
</dbReference>
<dbReference type="InterPro" id="IPR001705">
    <property type="entry name" value="Ribosomal_bL33"/>
</dbReference>
<dbReference type="InterPro" id="IPR018264">
    <property type="entry name" value="Ribosomal_bL33_CS"/>
</dbReference>
<dbReference type="InterPro" id="IPR038584">
    <property type="entry name" value="Ribosomal_bL33_sf"/>
</dbReference>
<dbReference type="InterPro" id="IPR011332">
    <property type="entry name" value="Ribosomal_zn-bd"/>
</dbReference>
<dbReference type="NCBIfam" id="NF001764">
    <property type="entry name" value="PRK00504.1"/>
    <property type="match status" value="1"/>
</dbReference>
<dbReference type="NCBIfam" id="NF001860">
    <property type="entry name" value="PRK00595.1"/>
    <property type="match status" value="1"/>
</dbReference>
<dbReference type="NCBIfam" id="TIGR01023">
    <property type="entry name" value="rpmG_bact"/>
    <property type="match status" value="1"/>
</dbReference>
<dbReference type="PANTHER" id="PTHR43168">
    <property type="entry name" value="50S RIBOSOMAL PROTEIN L33, CHLOROPLASTIC"/>
    <property type="match status" value="1"/>
</dbReference>
<dbReference type="PANTHER" id="PTHR43168:SF2">
    <property type="entry name" value="LARGE RIBOSOMAL SUBUNIT PROTEIN BL33C"/>
    <property type="match status" value="1"/>
</dbReference>
<dbReference type="Pfam" id="PF00471">
    <property type="entry name" value="Ribosomal_L33"/>
    <property type="match status" value="1"/>
</dbReference>
<dbReference type="SUPFAM" id="SSF57829">
    <property type="entry name" value="Zn-binding ribosomal proteins"/>
    <property type="match status" value="1"/>
</dbReference>
<dbReference type="PROSITE" id="PS00582">
    <property type="entry name" value="RIBOSOMAL_L33"/>
    <property type="match status" value="1"/>
</dbReference>
<evidence type="ECO:0000255" key="1">
    <source>
        <dbReference type="HAMAP-Rule" id="MF_00294"/>
    </source>
</evidence>
<evidence type="ECO:0000305" key="2"/>
<accession>Q8M9Y6</accession>
<sequence>MAKGKDVRLVITLECTNCSQNPNKRFSGISRYTTSKNRRNTTNRLELKKFCPQCSVHTIHKEIKK</sequence>
<feature type="chain" id="PRO_0000170278" description="Large ribosomal subunit protein bL33c">
    <location>
        <begin position="1"/>
        <end position="65"/>
    </location>
</feature>
<gene>
    <name evidence="1" type="primary">rpl33</name>
</gene>
<geneLocation type="chloroplast"/>
<reference key="1">
    <citation type="journal article" date="2002" name="Proc. Natl. Acad. Sci. U.S.A.">
        <title>The chloroplast and mitochondrial genome sequences of the charophyte Chaetosphaeridium globosum: insights into the timing of the events that restructured organelle DNAs within the green algal lineage that led to land plants.</title>
        <authorList>
            <person name="Turmel M."/>
            <person name="Otis C."/>
            <person name="Lemieux C."/>
        </authorList>
    </citation>
    <scope>NUCLEOTIDE SEQUENCE [LARGE SCALE GENOMIC DNA]</scope>
    <source>
        <strain>M1311</strain>
    </source>
</reference>
<keyword id="KW-0150">Chloroplast</keyword>
<keyword id="KW-0934">Plastid</keyword>
<keyword id="KW-0687">Ribonucleoprotein</keyword>
<keyword id="KW-0689">Ribosomal protein</keyword>
<organism>
    <name type="scientific">Chaetosphaeridium globosum</name>
    <name type="common">Charophycean green alga</name>
    <name type="synonym">Herposteiron globosum</name>
    <dbReference type="NCBI Taxonomy" id="96477"/>
    <lineage>
        <taxon>Eukaryota</taxon>
        <taxon>Viridiplantae</taxon>
        <taxon>Streptophyta</taxon>
        <taxon>Coleochaetophyceae</taxon>
        <taxon>Coleochaetales</taxon>
        <taxon>Chaetosphaeridiaceae</taxon>
        <taxon>Chaetosphaeridium</taxon>
    </lineage>
</organism>
<name>RK33_CHAGL</name>
<proteinExistence type="inferred from homology"/>
<comment type="subcellular location">
    <subcellularLocation>
        <location>Plastid</location>
        <location>Chloroplast</location>
    </subcellularLocation>
</comment>
<comment type="similarity">
    <text evidence="1">Belongs to the bacterial ribosomal protein bL33 family.</text>
</comment>